<proteinExistence type="evidence at protein level"/>
<dbReference type="EC" id="1.1.1.3" evidence="3"/>
<dbReference type="EMBL" id="CU329671">
    <property type="protein sequence ID" value="CAA22876.1"/>
    <property type="molecule type" value="Genomic_DNA"/>
</dbReference>
<dbReference type="PIR" id="T40673">
    <property type="entry name" value="T40673"/>
</dbReference>
<dbReference type="RefSeq" id="NP_596318.1">
    <property type="nucleotide sequence ID" value="NM_001022240.2"/>
</dbReference>
<dbReference type="SMR" id="O94671"/>
<dbReference type="BioGRID" id="277663">
    <property type="interactions" value="3"/>
</dbReference>
<dbReference type="FunCoup" id="O94671">
    <property type="interactions" value="145"/>
</dbReference>
<dbReference type="STRING" id="284812.O94671"/>
<dbReference type="iPTMnet" id="O94671"/>
<dbReference type="PaxDb" id="4896-SPBC776.03.1"/>
<dbReference type="EnsemblFungi" id="SPBC776.03.1">
    <property type="protein sequence ID" value="SPBC776.03.1:pep"/>
    <property type="gene ID" value="SPBC776.03"/>
</dbReference>
<dbReference type="GeneID" id="2541148"/>
<dbReference type="KEGG" id="spo:2541148"/>
<dbReference type="PomBase" id="SPBC776.03">
    <property type="gene designation" value="hom6"/>
</dbReference>
<dbReference type="VEuPathDB" id="FungiDB:SPBC776.03"/>
<dbReference type="eggNOG" id="KOG0455">
    <property type="taxonomic scope" value="Eukaryota"/>
</dbReference>
<dbReference type="HOGENOM" id="CLU_009116_0_1_1"/>
<dbReference type="InParanoid" id="O94671"/>
<dbReference type="OMA" id="IYTRCYS"/>
<dbReference type="PhylomeDB" id="O94671"/>
<dbReference type="UniPathway" id="UPA00050">
    <property type="reaction ID" value="UER00063"/>
</dbReference>
<dbReference type="UniPathway" id="UPA00051">
    <property type="reaction ID" value="UER00465"/>
</dbReference>
<dbReference type="PRO" id="PR:O94671"/>
<dbReference type="Proteomes" id="UP000002485">
    <property type="component" value="Chromosome II"/>
</dbReference>
<dbReference type="GO" id="GO:0004412">
    <property type="term" value="F:homoserine dehydrogenase activity"/>
    <property type="evidence" value="ECO:0000250"/>
    <property type="project" value="UniProtKB"/>
</dbReference>
<dbReference type="GO" id="GO:0046872">
    <property type="term" value="F:metal ion binding"/>
    <property type="evidence" value="ECO:0007669"/>
    <property type="project" value="UniProtKB-KW"/>
</dbReference>
<dbReference type="GO" id="GO:0070403">
    <property type="term" value="F:NAD+ binding"/>
    <property type="evidence" value="ECO:0000250"/>
    <property type="project" value="UniProtKB"/>
</dbReference>
<dbReference type="GO" id="GO:0050661">
    <property type="term" value="F:NADP binding"/>
    <property type="evidence" value="ECO:0007669"/>
    <property type="project" value="InterPro"/>
</dbReference>
<dbReference type="GO" id="GO:0009067">
    <property type="term" value="P:aspartate family amino acid biosynthetic process"/>
    <property type="evidence" value="ECO:0000318"/>
    <property type="project" value="GO_Central"/>
</dbReference>
<dbReference type="GO" id="GO:0009090">
    <property type="term" value="P:homoserine biosynthetic process"/>
    <property type="evidence" value="ECO:0000318"/>
    <property type="project" value="GO_Central"/>
</dbReference>
<dbReference type="GO" id="GO:0009086">
    <property type="term" value="P:methionine biosynthetic process"/>
    <property type="evidence" value="ECO:0000250"/>
    <property type="project" value="UniProtKB"/>
</dbReference>
<dbReference type="GO" id="GO:0009088">
    <property type="term" value="P:threonine biosynthetic process"/>
    <property type="evidence" value="ECO:0000250"/>
    <property type="project" value="UniProtKB"/>
</dbReference>
<dbReference type="FunFam" id="3.30.360.10:FF:000006">
    <property type="entry name" value="Bifunctional aspartokinase/homoserine dehydrogenase"/>
    <property type="match status" value="1"/>
</dbReference>
<dbReference type="Gene3D" id="3.30.360.10">
    <property type="entry name" value="Dihydrodipicolinate Reductase, domain 2"/>
    <property type="match status" value="1"/>
</dbReference>
<dbReference type="Gene3D" id="3.40.50.720">
    <property type="entry name" value="NAD(P)-binding Rossmann-like Domain"/>
    <property type="match status" value="1"/>
</dbReference>
<dbReference type="InterPro" id="IPR005106">
    <property type="entry name" value="Asp/hSer_DH_NAD-bd"/>
</dbReference>
<dbReference type="InterPro" id="IPR011147">
    <property type="entry name" value="Bifunc_Aspkin/hSer_DH"/>
</dbReference>
<dbReference type="InterPro" id="IPR001342">
    <property type="entry name" value="HDH_cat"/>
</dbReference>
<dbReference type="InterPro" id="IPR019811">
    <property type="entry name" value="HDH_CS"/>
</dbReference>
<dbReference type="InterPro" id="IPR022697">
    <property type="entry name" value="HDH_short"/>
</dbReference>
<dbReference type="InterPro" id="IPR036291">
    <property type="entry name" value="NAD(P)-bd_dom_sf"/>
</dbReference>
<dbReference type="PANTHER" id="PTHR43070">
    <property type="match status" value="1"/>
</dbReference>
<dbReference type="PANTHER" id="PTHR43070:SF5">
    <property type="entry name" value="HOMOSERINE DEHYDROGENASE"/>
    <property type="match status" value="1"/>
</dbReference>
<dbReference type="Pfam" id="PF00742">
    <property type="entry name" value="Homoserine_dh"/>
    <property type="match status" value="1"/>
</dbReference>
<dbReference type="Pfam" id="PF03447">
    <property type="entry name" value="NAD_binding_3"/>
    <property type="match status" value="1"/>
</dbReference>
<dbReference type="PIRSF" id="PIRSF036497">
    <property type="entry name" value="HDH_short"/>
    <property type="match status" value="1"/>
</dbReference>
<dbReference type="SUPFAM" id="SSF55347">
    <property type="entry name" value="Glyceraldehyde-3-phosphate dehydrogenase-like, C-terminal domain"/>
    <property type="match status" value="1"/>
</dbReference>
<dbReference type="SUPFAM" id="SSF51735">
    <property type="entry name" value="NAD(P)-binding Rossmann-fold domains"/>
    <property type="match status" value="1"/>
</dbReference>
<dbReference type="PROSITE" id="PS01042">
    <property type="entry name" value="HOMOSER_DHGENASE"/>
    <property type="match status" value="1"/>
</dbReference>
<evidence type="ECO:0000250" key="1">
    <source>
        <dbReference type="UniProtKB" id="F9VNG5"/>
    </source>
</evidence>
<evidence type="ECO:0000250" key="2">
    <source>
        <dbReference type="UniProtKB" id="O58802"/>
    </source>
</evidence>
<evidence type="ECO:0000250" key="3">
    <source>
        <dbReference type="UniProtKB" id="P31116"/>
    </source>
</evidence>
<evidence type="ECO:0000255" key="4">
    <source>
        <dbReference type="PIRSR" id="PIRSR036497-1"/>
    </source>
</evidence>
<evidence type="ECO:0000269" key="5">
    <source>
    </source>
</evidence>
<evidence type="ECO:0000305" key="6"/>
<evidence type="ECO:0000312" key="7">
    <source>
        <dbReference type="PomBase" id="SPBC776.03"/>
    </source>
</evidence>
<keyword id="KW-0028">Amino-acid biosynthesis</keyword>
<keyword id="KW-0479">Metal-binding</keyword>
<keyword id="KW-0486">Methionine biosynthesis</keyword>
<keyword id="KW-0520">NAD</keyword>
<keyword id="KW-0521">NADP</keyword>
<keyword id="KW-0560">Oxidoreductase</keyword>
<keyword id="KW-0597">Phosphoprotein</keyword>
<keyword id="KW-1185">Reference proteome</keyword>
<keyword id="KW-0915">Sodium</keyword>
<keyword id="KW-0791">Threonine biosynthesis</keyword>
<comment type="function">
    <text evidence="3">Catalyzes the conversion of L-aspartate-beta-semialdehyde (L-Asa) to L-homoserine (L-Hse), the third step in the biosynthesis of amino acids that derive from aspartate (the aspartate family of amino acids), including methioinine and threonine, the latter of which is a precursor to isoleucine; production of homoserine leads to a branch-point in the pathway as it can either be O-phosphorylated for processing to threonine, or O-acylated for processing to methionine.</text>
</comment>
<comment type="catalytic activity">
    <reaction evidence="3">
        <text>L-homoserine + NADP(+) = L-aspartate 4-semialdehyde + NADPH + H(+)</text>
        <dbReference type="Rhea" id="RHEA:15761"/>
        <dbReference type="ChEBI" id="CHEBI:15378"/>
        <dbReference type="ChEBI" id="CHEBI:57476"/>
        <dbReference type="ChEBI" id="CHEBI:57783"/>
        <dbReference type="ChEBI" id="CHEBI:58349"/>
        <dbReference type="ChEBI" id="CHEBI:537519"/>
        <dbReference type="EC" id="1.1.1.3"/>
    </reaction>
    <physiologicalReaction direction="right-to-left" evidence="3">
        <dbReference type="Rhea" id="RHEA:15763"/>
    </physiologicalReaction>
</comment>
<comment type="catalytic activity">
    <reaction evidence="3">
        <text>L-homoserine + NAD(+) = L-aspartate 4-semialdehyde + NADH + H(+)</text>
        <dbReference type="Rhea" id="RHEA:15757"/>
        <dbReference type="ChEBI" id="CHEBI:15378"/>
        <dbReference type="ChEBI" id="CHEBI:57476"/>
        <dbReference type="ChEBI" id="CHEBI:57540"/>
        <dbReference type="ChEBI" id="CHEBI:57945"/>
        <dbReference type="ChEBI" id="CHEBI:537519"/>
        <dbReference type="EC" id="1.1.1.3"/>
    </reaction>
    <physiologicalReaction direction="right-to-left" evidence="3">
        <dbReference type="Rhea" id="RHEA:15759"/>
    </physiologicalReaction>
</comment>
<comment type="cofactor">
    <cofactor evidence="3">
        <name>a metal cation</name>
        <dbReference type="ChEBI" id="CHEBI:25213"/>
    </cofactor>
    <text evidence="3">A sodium ion is seen in the structure; a metal ion may subtly affect the relative position of the nucleotide-binding region to influence enzyme activity, and could increase the stability of the enzyme.</text>
</comment>
<comment type="pathway">
    <text evidence="3">Amino-acid biosynthesis; L-methionine biosynthesis via de novo pathway; L-homoserine from L-aspartate: step 3/3.</text>
</comment>
<comment type="pathway">
    <text evidence="3">Amino-acid biosynthesis; L-threonine biosynthesis; L-threonine from L-aspartate: step 3/5.</text>
</comment>
<comment type="similarity">
    <text evidence="6">Belongs to the homoserine dehydrogenase family.</text>
</comment>
<sequence>MSASRTNVNVAIVGTGNIGGELLNQIKGFNENASTNGTTSFNVVAISSMEGHYVSKDYQPINLSEWKNLTSQNQGAYSLDALVDFLAKSPLPAILVDNTASEAIAQSYPKFLSKKINIATPNKKAFSASNDVYQNIIKASKESGALLMHEASVGAGLPIISTLKELIATGDEIIKIEGIFSGTLSYIFNVWSPNGKKGTASFSDIVKIAKQNGYTEPDPRDDLNGMDVARKVTILSRIAGVHVESASSFPVKSLIPEPLKSAVNAEEFLAGLPNFDSEFASMREEAEKEGKVVRFVGEADVANKTTLVKLEKYDASHPFANLQSSDNIISFTTKRYHTRPLVVIGAGAGAAVTAAGVLGDMIKIMSQVRASDAPSA</sequence>
<accession>O94671</accession>
<protein>
    <recommendedName>
        <fullName>Homoserine dehydrogenase</fullName>
        <shortName>HDH</shortName>
        <shortName evidence="3">HSD</shortName>
        <ecNumber evidence="3">1.1.1.3</ecNumber>
    </recommendedName>
</protein>
<name>DHOM_SCHPO</name>
<gene>
    <name evidence="7" type="primary">hom6</name>
    <name type="ORF">SPBC776.03</name>
</gene>
<feature type="chain" id="PRO_0000066706" description="Homoserine dehydrogenase">
    <location>
        <begin position="1"/>
        <end position="376"/>
    </location>
</feature>
<feature type="active site" description="Proton donor" evidence="4">
    <location>
        <position position="231"/>
    </location>
</feature>
<feature type="binding site" evidence="1">
    <location>
        <position position="17"/>
    </location>
    <ligand>
        <name>NADP(+)</name>
        <dbReference type="ChEBI" id="CHEBI:58349"/>
    </ligand>
</feature>
<feature type="binding site" evidence="3">
    <location>
        <position position="18"/>
    </location>
    <ligand>
        <name>NAD(+)</name>
        <dbReference type="ChEBI" id="CHEBI:57540"/>
    </ligand>
</feature>
<feature type="binding site" evidence="1">
    <location>
        <position position="18"/>
    </location>
    <ligand>
        <name>NADP(+)</name>
        <dbReference type="ChEBI" id="CHEBI:58349"/>
    </ligand>
</feature>
<feature type="binding site" evidence="2">
    <location>
        <position position="18"/>
    </location>
    <ligand>
        <name>NADPH</name>
        <dbReference type="ChEBI" id="CHEBI:57783"/>
    </ligand>
</feature>
<feature type="binding site" evidence="2">
    <location>
        <position position="67"/>
    </location>
    <ligand>
        <name>NADPH</name>
        <dbReference type="ChEBI" id="CHEBI:57783"/>
    </ligand>
</feature>
<feature type="binding site" evidence="3">
    <location>
        <position position="99"/>
    </location>
    <ligand>
        <name>NAD(+)</name>
        <dbReference type="ChEBI" id="CHEBI:57540"/>
    </ligand>
</feature>
<feature type="binding site" evidence="1">
    <location>
        <position position="99"/>
    </location>
    <ligand>
        <name>NADP(+)</name>
        <dbReference type="ChEBI" id="CHEBI:58349"/>
    </ligand>
</feature>
<feature type="binding site" evidence="2">
    <location>
        <position position="99"/>
    </location>
    <ligand>
        <name>NADPH</name>
        <dbReference type="ChEBI" id="CHEBI:57783"/>
    </ligand>
</feature>
<feature type="binding site" evidence="1">
    <location>
        <position position="123"/>
    </location>
    <ligand>
        <name>NADP(+)</name>
        <dbReference type="ChEBI" id="CHEBI:58349"/>
    </ligand>
</feature>
<feature type="binding site" evidence="2">
    <location>
        <position position="123"/>
    </location>
    <ligand>
        <name>NADPH</name>
        <dbReference type="ChEBI" id="CHEBI:57783"/>
    </ligand>
</feature>
<feature type="binding site" evidence="3">
    <location>
        <position position="150"/>
    </location>
    <ligand>
        <name>Na(+)</name>
        <dbReference type="ChEBI" id="CHEBI:29101"/>
    </ligand>
</feature>
<feature type="binding site" evidence="3">
    <location>
        <position position="153"/>
    </location>
    <ligand>
        <name>Na(+)</name>
        <dbReference type="ChEBI" id="CHEBI:29101"/>
    </ligand>
</feature>
<feature type="binding site" evidence="3">
    <location>
        <position position="155"/>
    </location>
    <ligand>
        <name>Na(+)</name>
        <dbReference type="ChEBI" id="CHEBI:29101"/>
    </ligand>
</feature>
<feature type="binding site" evidence="3">
    <location>
        <position position="157"/>
    </location>
    <ligand>
        <name>Na(+)</name>
        <dbReference type="ChEBI" id="CHEBI:29101"/>
    </ligand>
</feature>
<feature type="binding site" evidence="1">
    <location>
        <position position="213"/>
    </location>
    <ligand>
        <name>NADP(+)</name>
        <dbReference type="ChEBI" id="CHEBI:58349"/>
    </ligand>
</feature>
<feature type="binding site" evidence="3">
    <location>
        <position position="216"/>
    </location>
    <ligand>
        <name>L-homoserine</name>
        <dbReference type="ChEBI" id="CHEBI:57476"/>
    </ligand>
</feature>
<feature type="binding site" evidence="1">
    <location>
        <position position="216"/>
    </location>
    <ligand>
        <name>NADP(+)</name>
        <dbReference type="ChEBI" id="CHEBI:58349"/>
    </ligand>
</feature>
<feature type="binding site" evidence="3">
    <location>
        <position position="227"/>
    </location>
    <ligand>
        <name>L-homoserine</name>
        <dbReference type="ChEBI" id="CHEBI:57476"/>
    </ligand>
</feature>
<feature type="binding site" evidence="3">
    <location>
        <position position="349"/>
    </location>
    <ligand>
        <name>NAD(+)</name>
        <dbReference type="ChEBI" id="CHEBI:57540"/>
    </ligand>
</feature>
<feature type="binding site" evidence="1">
    <location>
        <position position="349"/>
    </location>
    <ligand>
        <name>NADP(+)</name>
        <dbReference type="ChEBI" id="CHEBI:58349"/>
    </ligand>
</feature>
<feature type="binding site" evidence="2">
    <location>
        <position position="349"/>
    </location>
    <ligand>
        <name>NADPH</name>
        <dbReference type="ChEBI" id="CHEBI:57783"/>
    </ligand>
</feature>
<feature type="modified residue" description="Phosphoserine" evidence="5">
    <location>
        <position position="201"/>
    </location>
</feature>
<reference key="1">
    <citation type="journal article" date="2002" name="Nature">
        <title>The genome sequence of Schizosaccharomyces pombe.</title>
        <authorList>
            <person name="Wood V."/>
            <person name="Gwilliam R."/>
            <person name="Rajandream M.A."/>
            <person name="Lyne M.H."/>
            <person name="Lyne R."/>
            <person name="Stewart A."/>
            <person name="Sgouros J.G."/>
            <person name="Peat N."/>
            <person name="Hayles J."/>
            <person name="Baker S.G."/>
            <person name="Basham D."/>
            <person name="Bowman S."/>
            <person name="Brooks K."/>
            <person name="Brown D."/>
            <person name="Brown S."/>
            <person name="Chillingworth T."/>
            <person name="Churcher C.M."/>
            <person name="Collins M."/>
            <person name="Connor R."/>
            <person name="Cronin A."/>
            <person name="Davis P."/>
            <person name="Feltwell T."/>
            <person name="Fraser A."/>
            <person name="Gentles S."/>
            <person name="Goble A."/>
            <person name="Hamlin N."/>
            <person name="Harris D.E."/>
            <person name="Hidalgo J."/>
            <person name="Hodgson G."/>
            <person name="Holroyd S."/>
            <person name="Hornsby T."/>
            <person name="Howarth S."/>
            <person name="Huckle E.J."/>
            <person name="Hunt S."/>
            <person name="Jagels K."/>
            <person name="James K.D."/>
            <person name="Jones L."/>
            <person name="Jones M."/>
            <person name="Leather S."/>
            <person name="McDonald S."/>
            <person name="McLean J."/>
            <person name="Mooney P."/>
            <person name="Moule S."/>
            <person name="Mungall K.L."/>
            <person name="Murphy L.D."/>
            <person name="Niblett D."/>
            <person name="Odell C."/>
            <person name="Oliver K."/>
            <person name="O'Neil S."/>
            <person name="Pearson D."/>
            <person name="Quail M.A."/>
            <person name="Rabbinowitsch E."/>
            <person name="Rutherford K.M."/>
            <person name="Rutter S."/>
            <person name="Saunders D."/>
            <person name="Seeger K."/>
            <person name="Sharp S."/>
            <person name="Skelton J."/>
            <person name="Simmonds M.N."/>
            <person name="Squares R."/>
            <person name="Squares S."/>
            <person name="Stevens K."/>
            <person name="Taylor K."/>
            <person name="Taylor R.G."/>
            <person name="Tivey A."/>
            <person name="Walsh S.V."/>
            <person name="Warren T."/>
            <person name="Whitehead S."/>
            <person name="Woodward J.R."/>
            <person name="Volckaert G."/>
            <person name="Aert R."/>
            <person name="Robben J."/>
            <person name="Grymonprez B."/>
            <person name="Weltjens I."/>
            <person name="Vanstreels E."/>
            <person name="Rieger M."/>
            <person name="Schaefer M."/>
            <person name="Mueller-Auer S."/>
            <person name="Gabel C."/>
            <person name="Fuchs M."/>
            <person name="Duesterhoeft A."/>
            <person name="Fritzc C."/>
            <person name="Holzer E."/>
            <person name="Moestl D."/>
            <person name="Hilbert H."/>
            <person name="Borzym K."/>
            <person name="Langer I."/>
            <person name="Beck A."/>
            <person name="Lehrach H."/>
            <person name="Reinhardt R."/>
            <person name="Pohl T.M."/>
            <person name="Eger P."/>
            <person name="Zimmermann W."/>
            <person name="Wedler H."/>
            <person name="Wambutt R."/>
            <person name="Purnelle B."/>
            <person name="Goffeau A."/>
            <person name="Cadieu E."/>
            <person name="Dreano S."/>
            <person name="Gloux S."/>
            <person name="Lelaure V."/>
            <person name="Mottier S."/>
            <person name="Galibert F."/>
            <person name="Aves S.J."/>
            <person name="Xiang Z."/>
            <person name="Hunt C."/>
            <person name="Moore K."/>
            <person name="Hurst S.M."/>
            <person name="Lucas M."/>
            <person name="Rochet M."/>
            <person name="Gaillardin C."/>
            <person name="Tallada V.A."/>
            <person name="Garzon A."/>
            <person name="Thode G."/>
            <person name="Daga R.R."/>
            <person name="Cruzado L."/>
            <person name="Jimenez J."/>
            <person name="Sanchez M."/>
            <person name="del Rey F."/>
            <person name="Benito J."/>
            <person name="Dominguez A."/>
            <person name="Revuelta J.L."/>
            <person name="Moreno S."/>
            <person name="Armstrong J."/>
            <person name="Forsburg S.L."/>
            <person name="Cerutti L."/>
            <person name="Lowe T."/>
            <person name="McCombie W.R."/>
            <person name="Paulsen I."/>
            <person name="Potashkin J."/>
            <person name="Shpakovski G.V."/>
            <person name="Ussery D."/>
            <person name="Barrell B.G."/>
            <person name="Nurse P."/>
        </authorList>
    </citation>
    <scope>NUCLEOTIDE SEQUENCE [LARGE SCALE GENOMIC DNA]</scope>
    <source>
        <strain>972 / ATCC 24843</strain>
    </source>
</reference>
<reference key="2">
    <citation type="journal article" date="2008" name="J. Proteome Res.">
        <title>Phosphoproteome analysis of fission yeast.</title>
        <authorList>
            <person name="Wilson-Grady J.T."/>
            <person name="Villen J."/>
            <person name="Gygi S.P."/>
        </authorList>
    </citation>
    <scope>PHOSPHORYLATION [LARGE SCALE ANALYSIS] AT SER-201</scope>
    <scope>IDENTIFICATION BY MASS SPECTROMETRY</scope>
</reference>
<organism>
    <name type="scientific">Schizosaccharomyces pombe (strain 972 / ATCC 24843)</name>
    <name type="common">Fission yeast</name>
    <dbReference type="NCBI Taxonomy" id="284812"/>
    <lineage>
        <taxon>Eukaryota</taxon>
        <taxon>Fungi</taxon>
        <taxon>Dikarya</taxon>
        <taxon>Ascomycota</taxon>
        <taxon>Taphrinomycotina</taxon>
        <taxon>Schizosaccharomycetes</taxon>
        <taxon>Schizosaccharomycetales</taxon>
        <taxon>Schizosaccharomycetaceae</taxon>
        <taxon>Schizosaccharomyces</taxon>
    </lineage>
</organism>